<reference evidence="15 16" key="1">
    <citation type="journal article" date="2008" name="DNA Res.">
        <title>Determination of the genome sequence of Porphyromonas gingivalis strain ATCC 33277 and genomic comparison with strain W83 revealed extensive genome rearrangements in P. gingivalis.</title>
        <authorList>
            <person name="Naito M."/>
            <person name="Hirakawa H."/>
            <person name="Yamashita A."/>
            <person name="Ohara N."/>
            <person name="Shoji M."/>
            <person name="Yukitake H."/>
            <person name="Nakayama K."/>
            <person name="Toh H."/>
            <person name="Yoshimura F."/>
            <person name="Kuhara S."/>
            <person name="Hattori M."/>
            <person name="Hayashi T."/>
            <person name="Nakayama K."/>
        </authorList>
    </citation>
    <scope>NUCLEOTIDE SEQUENCE [LARGE SCALE GENOMIC DNA]</scope>
    <source>
        <strain evidence="16">ATCC 33277 / DSM 20709 / CIP 103683 / JCM 12257 / NCTC 11834 / 2561</strain>
    </source>
</reference>
<reference key="2">
    <citation type="journal article" date="2009" name="Microbiology">
        <title>Anchoring and length regulation of Porphyromonas gingivalis Mfa1 fimbriae by the downstream gene product Mfa2.</title>
        <authorList>
            <person name="Hasegawa Y."/>
            <person name="Iwami J."/>
            <person name="Sato K."/>
            <person name="Park Y."/>
            <person name="Nishikawa K."/>
            <person name="Atsumi T."/>
            <person name="Moriguchi K."/>
            <person name="Murakami Y."/>
            <person name="Lamont R.J."/>
            <person name="Nakamura H."/>
            <person name="Ohno N."/>
            <person name="Yoshimura F."/>
        </authorList>
    </citation>
    <scope>IDENTIFICATION BY MASS SPECTROMETRY</scope>
    <scope>SUBCELLULAR LOCATION</scope>
    <scope>SUBUNIT</scope>
    <source>
        <strain evidence="7">ATCC 33277 / DSM 20709 / CIP 103683 / JCM 12257 / NCTC 11834 / 2561</strain>
    </source>
</reference>
<reference key="3">
    <citation type="journal article" date="2013" name="Mol. Oral. Microbiol.">
        <title>Localization and function of the accessory protein Mfa3 in Porphyromonas gingivalis Mfa1 fimbriae.</title>
        <authorList>
            <person name="Hasegawa Y."/>
            <person name="Nagano K."/>
            <person name="Ikai R."/>
            <person name="Izumigawa M."/>
            <person name="Yoshida Y."/>
            <person name="Kitai N."/>
            <person name="Lamont R.J."/>
            <person name="Murakami Y."/>
            <person name="Yoshimura F."/>
        </authorList>
    </citation>
    <scope>SUBCELLULAR LOCATION</scope>
    <scope>SUBUNIT</scope>
    <source>
        <strain evidence="8">ATCC 33277 / DSM 20709 / CIP 103683 / JCM 12257 / NCTC 11834 / 2561</strain>
    </source>
</reference>
<reference key="4">
    <citation type="journal article" date="2015" name="J. Dent. Res.">
        <title>A major fimbrilin variant of Mfa1 fimbriae in Porphyromonas gingivalis.</title>
        <authorList>
            <person name="Nagano K."/>
            <person name="Hasegawa Y."/>
            <person name="Yoshida Y."/>
            <person name="Yoshimura F."/>
        </authorList>
    </citation>
    <scope>FUNCTION</scope>
    <scope>SUBUNIT</scope>
    <scope>SUBCELLULAR LOCATION</scope>
    <source>
        <strain evidence="9">ATCC 33277 / DSM 20709 / CIP 103683 / JCM 12257 / NCTC 11834 / 2561</strain>
    </source>
</reference>
<reference key="5">
    <citation type="journal article" date="2015" name="PLoS ONE">
        <title>Mfa4, an accessory protein of Mfa1 fimbriae, modulates fimbrial biogenesis, cell auto-aggregation, and biofilm formation in Porphyromonas gingivalis.</title>
        <authorList>
            <person name="Ikai R."/>
            <person name="Hasegawa Y."/>
            <person name="Izumigawa M."/>
            <person name="Nagano K."/>
            <person name="Yoshida Y."/>
            <person name="Kitai N."/>
            <person name="Lamont R.J."/>
            <person name="Yoshimura F."/>
            <person name="Murakami Y."/>
        </authorList>
    </citation>
    <scope>PROTEIN SEQUENCE OF 54-63</scope>
    <scope>PROPEPTIDE</scope>
    <scope>SUBCELLULAR LOCATION</scope>
    <scope>SUBUNIT</scope>
    <scope>DISRUPTION PHENOTYPE</scope>
    <source>
        <strain evidence="10">ATCC 33277 / DSM 20709 / CIP 103683 / JCM 12257 / NCTC 11834 / 2561</strain>
    </source>
</reference>
<reference key="6">
    <citation type="journal article" date="2016" name="Sci. Rep.">
        <title>Structure of the fimbrial protein Mfa4 from Porphyromonas gingivalis in its precursor form: implications for a donor-strand complementation mechanism.</title>
        <authorList>
            <person name="Kloppsteck P."/>
            <person name="Hall M."/>
            <person name="Hasegawa Y."/>
            <person name="Persson K."/>
        </authorList>
    </citation>
    <scope>X-RAY CRYSTALLOGRAPHY (1.90 ANGSTROMS) OF 26-333</scope>
    <scope>PROTEIN SEQUENCE OF N-TERMINUS</scope>
    <scope>PROPEPTIDE</scope>
    <scope>SUBCELLULAR LOCATION</scope>
    <scope>SUBUNIT</scope>
    <scope>MUTAGENESIS OF ARG-53</scope>
    <source>
        <strain evidence="11">ATCC 33277 / DSM 20709 / CIP 103683 / JCM 12257 / NCTC 11834 / 2561</strain>
    </source>
</reference>
<gene>
    <name evidence="15" type="ordered locus">PGN_0290</name>
</gene>
<name>MFA4_PORG3</name>
<dbReference type="EMBL" id="AP009380">
    <property type="protein sequence ID" value="BAG32809.1"/>
    <property type="molecule type" value="Genomic_DNA"/>
</dbReference>
<dbReference type="RefSeq" id="WP_012457398.1">
    <property type="nucleotide sequence ID" value="NC_010729.1"/>
</dbReference>
<dbReference type="PDB" id="5DHM">
    <property type="method" value="X-ray"/>
    <property type="resolution" value="1.90 A"/>
    <property type="chains" value="A/B=26-333"/>
</dbReference>
<dbReference type="PDBsum" id="5DHM"/>
<dbReference type="SMR" id="B2RHG4"/>
<dbReference type="GeneID" id="29255536"/>
<dbReference type="KEGG" id="pgn:PGN_0290"/>
<dbReference type="eggNOG" id="ENOG502ZAWJ">
    <property type="taxonomic scope" value="Bacteria"/>
</dbReference>
<dbReference type="HOGENOM" id="CLU_833813_0_0_10"/>
<dbReference type="OrthoDB" id="1014132at2"/>
<dbReference type="BioCyc" id="PGIN431947:G1G2V-317-MONOMER"/>
<dbReference type="Proteomes" id="UP000008842">
    <property type="component" value="Chromosome"/>
</dbReference>
<dbReference type="GO" id="GO:0009279">
    <property type="term" value="C:cell outer membrane"/>
    <property type="evidence" value="ECO:0007669"/>
    <property type="project" value="UniProtKB-SubCell"/>
</dbReference>
<dbReference type="GO" id="GO:0009289">
    <property type="term" value="C:pilus"/>
    <property type="evidence" value="ECO:0000314"/>
    <property type="project" value="UniProtKB"/>
</dbReference>
<dbReference type="Gene3D" id="2.60.40.2580">
    <property type="match status" value="1"/>
</dbReference>
<dbReference type="InterPro" id="IPR029141">
    <property type="entry name" value="FimA_N"/>
</dbReference>
<dbReference type="InterPro" id="IPR054771">
    <property type="entry name" value="MfA4_C"/>
</dbReference>
<dbReference type="Pfam" id="PF22358">
    <property type="entry name" value="MfA4_C"/>
    <property type="match status" value="1"/>
</dbReference>
<dbReference type="Pfam" id="PF06321">
    <property type="entry name" value="P_gingi_FimA"/>
    <property type="match status" value="1"/>
</dbReference>
<dbReference type="PROSITE" id="PS51257">
    <property type="entry name" value="PROKAR_LIPOPROTEIN"/>
    <property type="match status" value="1"/>
</dbReference>
<protein>
    <recommendedName>
        <fullName evidence="11">Minor fimbrium tip subunit MfA4</fullName>
    </recommendedName>
    <alternativeName>
        <fullName evidence="15">Immunoreactive 32 kDa antigen</fullName>
    </alternativeName>
</protein>
<feature type="signal peptide" evidence="1">
    <location>
        <begin position="1"/>
        <end position="18"/>
    </location>
</feature>
<feature type="propeptide" id="PRO_0000436796" evidence="5 6">
    <location>
        <begin position="19"/>
        <end position="53"/>
    </location>
</feature>
<feature type="chain" id="PRO_0000436797" description="Minor fimbrium tip subunit MfA4">
    <location>
        <begin position="54"/>
        <end position="333"/>
    </location>
</feature>
<feature type="site" description="Cleavage; by gingipain" evidence="6">
    <location>
        <begin position="53"/>
        <end position="54"/>
    </location>
</feature>
<feature type="lipid moiety-binding region" description="N-palmitoyl cysteine" evidence="1">
    <location>
        <position position="19"/>
    </location>
</feature>
<feature type="lipid moiety-binding region" description="S-diacylglycerol cysteine" evidence="1">
    <location>
        <position position="19"/>
    </location>
</feature>
<feature type="mutagenesis site" description="Abolishes cleavage site." evidence="6">
    <original>R</original>
    <variation>A</variation>
    <location>
        <position position="53"/>
    </location>
</feature>
<feature type="strand" evidence="17">
    <location>
        <begin position="32"/>
        <end position="39"/>
    </location>
</feature>
<feature type="strand" evidence="17">
    <location>
        <begin position="42"/>
        <end position="50"/>
    </location>
</feature>
<feature type="helix" evidence="17">
    <location>
        <begin position="58"/>
        <end position="61"/>
    </location>
</feature>
<feature type="strand" evidence="17">
    <location>
        <begin position="66"/>
        <end position="71"/>
    </location>
</feature>
<feature type="strand" evidence="17">
    <location>
        <begin position="75"/>
        <end position="77"/>
    </location>
</feature>
<feature type="strand" evidence="17">
    <location>
        <begin position="79"/>
        <end position="83"/>
    </location>
</feature>
<feature type="helix" evidence="17">
    <location>
        <begin position="85"/>
        <end position="87"/>
    </location>
</feature>
<feature type="turn" evidence="17">
    <location>
        <begin position="95"/>
        <end position="98"/>
    </location>
</feature>
<feature type="strand" evidence="17">
    <location>
        <begin position="99"/>
        <end position="105"/>
    </location>
</feature>
<feature type="helix" evidence="17">
    <location>
        <begin position="106"/>
        <end position="109"/>
    </location>
</feature>
<feature type="strand" evidence="17">
    <location>
        <begin position="111"/>
        <end position="119"/>
    </location>
</feature>
<feature type="helix" evidence="17">
    <location>
        <begin position="122"/>
        <end position="129"/>
    </location>
</feature>
<feature type="helix" evidence="17">
    <location>
        <begin position="134"/>
        <end position="139"/>
    </location>
</feature>
<feature type="strand" evidence="17">
    <location>
        <begin position="141"/>
        <end position="143"/>
    </location>
</feature>
<feature type="turn" evidence="17">
    <location>
        <begin position="149"/>
        <end position="151"/>
    </location>
</feature>
<feature type="strand" evidence="17">
    <location>
        <begin position="158"/>
        <end position="165"/>
    </location>
</feature>
<feature type="turn" evidence="17">
    <location>
        <begin position="166"/>
        <end position="168"/>
    </location>
</feature>
<feature type="strand" evidence="17">
    <location>
        <begin position="170"/>
        <end position="189"/>
    </location>
</feature>
<feature type="helix" evidence="17">
    <location>
        <begin position="192"/>
        <end position="194"/>
    </location>
</feature>
<feature type="strand" evidence="17">
    <location>
        <begin position="204"/>
        <end position="216"/>
    </location>
</feature>
<feature type="strand" evidence="17">
    <location>
        <begin position="218"/>
        <end position="222"/>
    </location>
</feature>
<feature type="turn" evidence="17">
    <location>
        <begin position="239"/>
        <end position="241"/>
    </location>
</feature>
<feature type="strand" evidence="17">
    <location>
        <begin position="245"/>
        <end position="248"/>
    </location>
</feature>
<feature type="helix" evidence="17">
    <location>
        <begin position="251"/>
        <end position="253"/>
    </location>
</feature>
<feature type="strand" evidence="17">
    <location>
        <begin position="254"/>
        <end position="256"/>
    </location>
</feature>
<feature type="strand" evidence="17">
    <location>
        <begin position="259"/>
        <end position="266"/>
    </location>
</feature>
<feature type="strand" evidence="17">
    <location>
        <begin position="272"/>
        <end position="282"/>
    </location>
</feature>
<feature type="strand" evidence="17">
    <location>
        <begin position="284"/>
        <end position="287"/>
    </location>
</feature>
<feature type="strand" evidence="17">
    <location>
        <begin position="290"/>
        <end position="295"/>
    </location>
</feature>
<feature type="strand" evidence="17">
    <location>
        <begin position="311"/>
        <end position="316"/>
    </location>
</feature>
<feature type="strand" evidence="17">
    <location>
        <begin position="319"/>
        <end position="321"/>
    </location>
</feature>
<feature type="strand" evidence="17">
    <location>
        <begin position="325"/>
        <end position="332"/>
    </location>
</feature>
<evidence type="ECO:0000255" key="1">
    <source>
        <dbReference type="PROSITE-ProRule" id="PRU00303"/>
    </source>
</evidence>
<evidence type="ECO:0000269" key="2">
    <source>
    </source>
</evidence>
<evidence type="ECO:0000269" key="3">
    <source>
    </source>
</evidence>
<evidence type="ECO:0000269" key="4">
    <source>
    </source>
</evidence>
<evidence type="ECO:0000269" key="5">
    <source>
    </source>
</evidence>
<evidence type="ECO:0000269" key="6">
    <source>
    </source>
</evidence>
<evidence type="ECO:0000303" key="7">
    <source>
    </source>
</evidence>
<evidence type="ECO:0000303" key="8">
    <source>
    </source>
</evidence>
<evidence type="ECO:0000303" key="9">
    <source>
    </source>
</evidence>
<evidence type="ECO:0000303" key="10">
    <source>
    </source>
</evidence>
<evidence type="ECO:0000303" key="11">
    <source>
    </source>
</evidence>
<evidence type="ECO:0000305" key="12"/>
<evidence type="ECO:0000305" key="13">
    <source>
    </source>
</evidence>
<evidence type="ECO:0000305" key="14">
    <source>
    </source>
</evidence>
<evidence type="ECO:0000312" key="15">
    <source>
        <dbReference type="EMBL" id="BAG32809.1"/>
    </source>
</evidence>
<evidence type="ECO:0000312" key="16">
    <source>
        <dbReference type="Proteomes" id="UP000008842"/>
    </source>
</evidence>
<evidence type="ECO:0007829" key="17">
    <source>
        <dbReference type="PDB" id="5DHM"/>
    </source>
</evidence>
<keyword id="KW-0002">3D-structure</keyword>
<keyword id="KW-0998">Cell outer membrane</keyword>
<keyword id="KW-0903">Direct protein sequencing</keyword>
<keyword id="KW-0281">Fimbrium</keyword>
<keyword id="KW-0449">Lipoprotein</keyword>
<keyword id="KW-0472">Membrane</keyword>
<keyword id="KW-0564">Palmitate</keyword>
<keyword id="KW-0732">Signal</keyword>
<keyword id="KW-0843">Virulence</keyword>
<sequence>MKKYLLYASLLTSVLLFSCSKNNPSEPVEDRSIEISIRVDDFTKTGETVRYERNQGSAAERLITNLYLLLFDQSGANPAKYYIAGNTFSGGIWLPDDMKVKLDMTQSEAGERKVYVVANVDNAVKTALDAVANESDLQTVKRTTAMPWSTDIASPFLMSGNKTHDFLANRLLDNVPLVRAIAKVELNISLSEKFQIVPIIVNGSLSEFKFRYVNFDKETYVVKPTTKPDNLISSANGVWPQITDWTVWGASLNTSPAPDAGTGYTLDANGKVTALRIVTYLNERDSKGATVEVALPRVDDGTLPPPEFGPELYRLPLPDKILRNHWYKYEVEI</sequence>
<organism>
    <name type="scientific">Porphyromonas gingivalis (strain ATCC 33277 / DSM 20709 / CIP 103683 / JCM 12257 / NCTC 11834 / 2561)</name>
    <dbReference type="NCBI Taxonomy" id="431947"/>
    <lineage>
        <taxon>Bacteria</taxon>
        <taxon>Pseudomonadati</taxon>
        <taxon>Bacteroidota</taxon>
        <taxon>Bacteroidia</taxon>
        <taxon>Bacteroidales</taxon>
        <taxon>Porphyromonadaceae</taxon>
        <taxon>Porphyromonas</taxon>
    </lineage>
</organism>
<proteinExistence type="evidence at protein level"/>
<accession>B2RHG4</accession>
<comment type="function">
    <text evidence="2 4 12">Tip subunit of the minor fimbriae. These filamentous pili are attached to the cell surface; they mediate biofilm formation, adhesion onto host cells and onto other bacteria that are part of the oral microbiome (PubMed:19589838, PubMed:26001707). They play an important role in invasion of periodontal tissues and are recognized as major virulence factors (Probable).</text>
</comment>
<comment type="subunit">
    <text evidence="2 3 4 5 6 12">Component of the fimbrium tip. Minor fimbriae are composed of a structural subunit, most often Mfa1, and the accessory subunits Mfa3, Mfa4 and Mfa5 (PubMed:19589838, PubMed:24118823, PubMed:26001707, PubMed:26437277, PubMed:26972441). Mfa4 is required for Mfa3 and Mfa5 insertion into the fimbrium (PubMed:26437277). Fimbrium assembly occurs by linear, head-to-tail oligomerization of fimbrial subunits. This is mediated via insertion of a C-terminal beta-strand from one subunit into a groove in the N-terminal domain of the following subunit (PubMed:26972441).</text>
</comment>
<comment type="subcellular location">
    <subcellularLocation>
        <location evidence="2 3 4 5 6">Fimbrium</location>
    </subcellularLocation>
    <subcellularLocation>
        <location evidence="5">Cell outer membrane</location>
    </subcellularLocation>
    <text evidence="13 14">Targeted to the outer membrane as a palmitoylated precursor. The lipid modification is no longer present after proteolytic processing to the mature form.</text>
</comment>
<comment type="disruption phenotype">
    <text evidence="5">No effect on autoaggregation.</text>
</comment>
<comment type="miscellaneous">
    <text evidence="12">The name (minor fimbrium subunit) does not indicate the abundance of the protein, but is derived from the greater length of the major fimbriae. In strain ATCC 33277 and strain ATCC BAA-1703 / FDC 381, major fimbriae are 300 - 1600 nM in length and about 5 nm in diameter. In contrast, minor fimbriae are only about 80 - 120 nm long. This length difference is observed only in a small number of strains, including strain ATCC 33277 and strain ATCC BAA-1703 / FDC 381, and is due to a loss of function mutation in FimB, a protein that restricts fimbrial length in other strains.</text>
</comment>
<comment type="similarity">
    <text evidence="12">Belongs to the bacteroidetes fimbrillin superfamily. FimA/Mfa1 family.</text>
</comment>